<gene>
    <name evidence="5" type="primary">ceaS</name>
</gene>
<organism>
    <name type="scientific">Streptomyces clavuligerus</name>
    <dbReference type="NCBI Taxonomy" id="1901"/>
    <lineage>
        <taxon>Bacteria</taxon>
        <taxon>Bacillati</taxon>
        <taxon>Actinomycetota</taxon>
        <taxon>Actinomycetes</taxon>
        <taxon>Kitasatosporales</taxon>
        <taxon>Streptomycetaceae</taxon>
        <taxon>Streptomyces</taxon>
    </lineage>
</organism>
<reference key="1">
    <citation type="journal article" date="1994" name="Gene">
        <title>Cloning, sequencing and disruption of a gene from Streptomyces clavuligerus involved in clavulanic acid biosynthesis.</title>
        <authorList>
            <person name="Aidoo K.A."/>
            <person name="Wong A."/>
            <person name="Alexander D.C."/>
            <person name="Rittammer R.A.R."/>
            <person name="Jensen S.E."/>
        </authorList>
    </citation>
    <scope>NUCLEOTIDE SEQUENCE [GENOMIC DNA]</scope>
    <source>
        <strain>NRRL3585</strain>
    </source>
</reference>
<reference key="2">
    <citation type="journal article" date="1996" name="J. Bacteriol.">
        <title>Molecular analysis of a beta-lactam resistance gene encoded within the cephamycin gene cluster of Streptomyces clavuligerus.</title>
        <authorList>
            <person name="Paradkar A.S."/>
            <person name="Aidoo K.A."/>
            <person name="Wong A."/>
            <person name="Jensen S.E."/>
        </authorList>
    </citation>
    <scope>NUCLEOTIDE SEQUENCE [GENOMIC DNA]</scope>
    <source>
        <strain>NRRL3585</strain>
    </source>
</reference>
<reference key="3">
    <citation type="journal article" date="1998" name="Mol. Microbiol.">
        <title>A pathway-specific transcriptional activator regulates late steps of clavulanic acid biosynthesis in Streptomyces clavuligerus.</title>
        <authorList>
            <person name="Paradkar A.S."/>
            <person name="Aidoo K.A."/>
            <person name="Jensen S.E."/>
        </authorList>
    </citation>
    <scope>NUCLEOTIDE SEQUENCE [GENOMIC DNA]</scope>
    <source>
        <strain>NRRL3585</strain>
    </source>
</reference>
<reference key="4">
    <citation type="journal article" date="2000" name="Antimicrob. Agents Chemother.">
        <title>Enzymes catalyzing the early steps of clavulanic acid biosynthesis are encoded by two sets of paralogous genes in Streptomyces clavuligerus.</title>
        <authorList>
            <person name="Jensen S.E."/>
            <person name="Elder K.J."/>
            <person name="Aidoo K.A."/>
            <person name="Paradkar A.S."/>
        </authorList>
    </citation>
    <scope>NUCLEOTIDE SEQUENCE [GENOMIC DNA]</scope>
    <source>
        <strain>NRRL3585</strain>
    </source>
</reference>
<reference key="5">
    <citation type="journal article" date="1999" name="J. Am. Chem. Soc.">
        <title>Origin of the beta-lactam carbons in clavulanic acid from an unusual thiamine pyrophosphate-mediated reaction.</title>
        <authorList>
            <person name="Khaleeli N."/>
            <person name="Li R."/>
            <person name="Townsend C.A."/>
        </authorList>
    </citation>
    <scope>FUNCTION</scope>
    <scope>CATALYTIC ACTIVITY</scope>
    <scope>COFACTOR</scope>
</reference>
<reference key="6">
    <citation type="journal article" date="2007" name="J. Am. Chem. Soc.">
        <title>Observation of an acryloyl-thiamin diphosphate adduct in the first step of clavulanic acid biosynthesis.</title>
        <authorList>
            <person name="Merski M."/>
            <person name="Townsend C.A."/>
        </authorList>
    </citation>
    <scope>FUNCTION</scope>
    <scope>CATALYTIC ACTIVITY</scope>
    <scope>COFACTOR</scope>
    <scope>REACTION MECHANISM</scope>
</reference>
<reference key="7">
    <citation type="journal article" date="2004" name="J. Biol. Chem.">
        <title>Crystal structure and mechanistic implications of N2-(2-carboxyethyl)arginine synthase, the first enzyme in the clavulanic acid biosynthesis pathway.</title>
        <authorList>
            <person name="Caines M.E."/>
            <person name="Elkins J.M."/>
            <person name="Hewitson K.S."/>
            <person name="Schofield C.J."/>
        </authorList>
    </citation>
    <scope>X-RAY CRYSTALLOGRAPHY (2.35 ANGSTROMS) IN COMPLEX WITH THIAMINE PYROPHOSPHATE AND MAGNESIUM IONS</scope>
    <scope>COFACTOR</scope>
    <scope>SUBUNIT</scope>
    <scope>MASS SPECTROMETRY</scope>
</reference>
<reference key="8">
    <citation type="journal article" date="2009" name="Biochem. Biophys. Res. Commun.">
        <title>Structural and mechanistic studies on N(2)-(2-carboxyethyl)arginine synthase.</title>
        <authorList>
            <person name="Caines M.E."/>
            <person name="Sorensen J.L."/>
            <person name="Schofield C.J."/>
        </authorList>
    </citation>
    <scope>X-RAY CRYSTALLOGRAPHY (2.00 ANGSTROMS) IN COMPLEX WITH SUBSTRATE ANALOGS; THIAMINE PYROPHOSPHATE AND MAGNESIUM IONS</scope>
    <scope>COFACTOR</scope>
    <scope>SUBUNIT</scope>
    <scope>REACTION MECHANISM</scope>
</reference>
<protein>
    <recommendedName>
        <fullName evidence="6">N(2)-(2-carboxyethyl)arginine synthase</fullName>
        <shortName evidence="6">CEA synthetase</shortName>
        <shortName evidence="6">CEAS</shortName>
        <ecNumber evidence="2 4">2.5.1.66</ecNumber>
    </recommendedName>
</protein>
<evidence type="ECO:0000269" key="1">
    <source>
    </source>
</evidence>
<evidence type="ECO:0000269" key="2">
    <source>
    </source>
</evidence>
<evidence type="ECO:0000269" key="3">
    <source>
    </source>
</evidence>
<evidence type="ECO:0000269" key="4">
    <source ref="5"/>
</evidence>
<evidence type="ECO:0000303" key="5">
    <source>
    </source>
</evidence>
<evidence type="ECO:0000303" key="6">
    <source>
    </source>
</evidence>
<evidence type="ECO:0000305" key="7"/>
<evidence type="ECO:0007829" key="8">
    <source>
        <dbReference type="PDB" id="2IHT"/>
    </source>
</evidence>
<evidence type="ECO:0007829" key="9">
    <source>
        <dbReference type="PDB" id="2IHV"/>
    </source>
</evidence>
<feature type="initiator methionine" description="Removed" evidence="1">
    <location>
        <position position="1"/>
    </location>
</feature>
<feature type="chain" id="PRO_0000430817" description="N(2)-(2-carboxyethyl)arginine synthase">
    <location>
        <begin position="2"/>
        <end position="573"/>
    </location>
</feature>
<feature type="binding site" evidence="3">
    <location>
        <position position="271"/>
    </location>
    <ligand>
        <name>substrate</name>
    </ligand>
</feature>
<feature type="binding site" evidence="3">
    <location>
        <position position="301"/>
    </location>
    <ligand>
        <name>substrate</name>
    </ligand>
</feature>
<feature type="binding site" evidence="1 3">
    <location>
        <begin position="410"/>
        <end position="413"/>
    </location>
    <ligand>
        <name>thiamine diphosphate</name>
        <dbReference type="ChEBI" id="CHEBI:58937"/>
    </ligand>
</feature>
<feature type="binding site" evidence="3">
    <location>
        <begin position="414"/>
        <end position="415"/>
    </location>
    <ligand>
        <name>substrate</name>
    </ligand>
</feature>
<feature type="binding site" evidence="1 3">
    <location>
        <begin position="436"/>
        <end position="438"/>
    </location>
    <ligand>
        <name>thiamine diphosphate</name>
        <dbReference type="ChEBI" id="CHEBI:58937"/>
    </ligand>
</feature>
<feature type="binding site" evidence="1 3">
    <location>
        <position position="463"/>
    </location>
    <ligand>
        <name>Mg(2+)</name>
        <dbReference type="ChEBI" id="CHEBI:18420"/>
    </ligand>
</feature>
<feature type="binding site" evidence="1 3">
    <location>
        <begin position="464"/>
        <end position="465"/>
    </location>
    <ligand>
        <name>thiamine diphosphate</name>
        <dbReference type="ChEBI" id="CHEBI:58937"/>
    </ligand>
</feature>
<feature type="binding site" evidence="1 3">
    <location>
        <begin position="490"/>
        <end position="495"/>
    </location>
    <ligand>
        <name>thiamine diphosphate</name>
        <dbReference type="ChEBI" id="CHEBI:58937"/>
    </ligand>
</feature>
<feature type="binding site" evidence="1 3">
    <location>
        <position position="490"/>
    </location>
    <ligand>
        <name>Mg(2+)</name>
        <dbReference type="ChEBI" id="CHEBI:18420"/>
    </ligand>
</feature>
<feature type="binding site" evidence="1 3">
    <location>
        <position position="492"/>
    </location>
    <ligand>
        <name>Mg(2+)</name>
        <dbReference type="ChEBI" id="CHEBI:18420"/>
    </ligand>
</feature>
<feature type="binding site" evidence="1 3">
    <location>
        <position position="561"/>
    </location>
    <ligand>
        <name>thiamine diphosphate</name>
        <dbReference type="ChEBI" id="CHEBI:58937"/>
    </ligand>
</feature>
<feature type="binding site" evidence="3">
    <location>
        <position position="571"/>
    </location>
    <ligand>
        <name>substrate</name>
    </ligand>
</feature>
<feature type="helix" evidence="8">
    <location>
        <begin position="14"/>
        <end position="24"/>
    </location>
</feature>
<feature type="strand" evidence="8">
    <location>
        <begin position="29"/>
        <end position="32"/>
    </location>
</feature>
<feature type="helix" evidence="8">
    <location>
        <begin position="36"/>
        <end position="39"/>
    </location>
</feature>
<feature type="strand" evidence="8">
    <location>
        <begin position="50"/>
        <end position="53"/>
    </location>
</feature>
<feature type="helix" evidence="8">
    <location>
        <begin position="57"/>
        <end position="71"/>
    </location>
</feature>
<feature type="strand" evidence="8">
    <location>
        <begin position="75"/>
        <end position="79"/>
    </location>
</feature>
<feature type="helix" evidence="8">
    <location>
        <begin position="83"/>
        <end position="98"/>
    </location>
</feature>
<feature type="strand" evidence="8">
    <location>
        <begin position="102"/>
        <end position="109"/>
    </location>
</feature>
<feature type="helix" evidence="8">
    <location>
        <begin position="111"/>
        <end position="113"/>
    </location>
</feature>
<feature type="turn" evidence="8">
    <location>
        <begin position="116"/>
        <end position="118"/>
    </location>
</feature>
<feature type="helix" evidence="8">
    <location>
        <begin position="125"/>
        <end position="129"/>
    </location>
</feature>
<feature type="helix" evidence="8">
    <location>
        <begin position="130"/>
        <end position="132"/>
    </location>
</feature>
<feature type="strand" evidence="8">
    <location>
        <begin position="133"/>
        <end position="138"/>
    </location>
</feature>
<feature type="helix" evidence="8">
    <location>
        <begin position="142"/>
        <end position="144"/>
    </location>
</feature>
<feature type="helix" evidence="8">
    <location>
        <begin position="145"/>
        <end position="156"/>
    </location>
</feature>
<feature type="strand" evidence="8">
    <location>
        <begin position="158"/>
        <end position="160"/>
    </location>
</feature>
<feature type="strand" evidence="8">
    <location>
        <begin position="164"/>
        <end position="169"/>
    </location>
</feature>
<feature type="helix" evidence="8">
    <location>
        <begin position="170"/>
        <end position="173"/>
    </location>
</feature>
<feature type="strand" evidence="9">
    <location>
        <begin position="181"/>
        <end position="183"/>
    </location>
</feature>
<feature type="strand" evidence="8">
    <location>
        <begin position="195"/>
        <end position="198"/>
    </location>
</feature>
<feature type="helix" evidence="8">
    <location>
        <begin position="202"/>
        <end position="215"/>
    </location>
</feature>
<feature type="strand" evidence="8">
    <location>
        <begin position="217"/>
        <end position="223"/>
    </location>
</feature>
<feature type="helix" evidence="8">
    <location>
        <begin position="225"/>
        <end position="229"/>
    </location>
</feature>
<feature type="helix" evidence="8">
    <location>
        <begin position="233"/>
        <end position="243"/>
    </location>
</feature>
<feature type="strand" evidence="8">
    <location>
        <begin position="247"/>
        <end position="249"/>
    </location>
</feature>
<feature type="turn" evidence="8">
    <location>
        <begin position="252"/>
        <end position="255"/>
    </location>
</feature>
<feature type="strand" evidence="8">
    <location>
        <begin position="264"/>
        <end position="267"/>
    </location>
</feature>
<feature type="helix" evidence="8">
    <location>
        <begin position="272"/>
        <end position="276"/>
    </location>
</feature>
<feature type="helix" evidence="8">
    <location>
        <begin position="280"/>
        <end position="285"/>
    </location>
</feature>
<feature type="strand" evidence="8">
    <location>
        <begin position="290"/>
        <end position="294"/>
    </location>
</feature>
<feature type="helix" evidence="8">
    <location>
        <begin position="298"/>
        <end position="300"/>
    </location>
</feature>
<feature type="helix" evidence="8">
    <location>
        <begin position="304"/>
        <end position="307"/>
    </location>
</feature>
<feature type="strand" evidence="8">
    <location>
        <begin position="314"/>
        <end position="321"/>
    </location>
</feature>
<feature type="turn" evidence="8">
    <location>
        <begin position="326"/>
        <end position="328"/>
    </location>
</feature>
<feature type="strand" evidence="8">
    <location>
        <begin position="332"/>
        <end position="337"/>
    </location>
</feature>
<feature type="helix" evidence="8">
    <location>
        <begin position="339"/>
        <end position="349"/>
    </location>
</feature>
<feature type="turn" evidence="8">
    <location>
        <begin position="350"/>
        <end position="352"/>
    </location>
</feature>
<feature type="helix" evidence="8">
    <location>
        <begin position="362"/>
        <end position="372"/>
    </location>
</feature>
<feature type="strand" evidence="8">
    <location>
        <begin position="379"/>
        <end position="382"/>
    </location>
</feature>
<feature type="helix" evidence="8">
    <location>
        <begin position="384"/>
        <end position="398"/>
    </location>
</feature>
<feature type="strand" evidence="8">
    <location>
        <begin position="405"/>
        <end position="408"/>
    </location>
</feature>
<feature type="helix" evidence="8">
    <location>
        <begin position="412"/>
        <end position="420"/>
    </location>
</feature>
<feature type="strand" evidence="8">
    <location>
        <begin position="428"/>
        <end position="430"/>
    </location>
</feature>
<feature type="strand" evidence="8">
    <location>
        <begin position="433"/>
        <end position="435"/>
    </location>
</feature>
<feature type="helix" evidence="8">
    <location>
        <begin position="441"/>
        <end position="451"/>
    </location>
</feature>
<feature type="strand" evidence="8">
    <location>
        <begin position="457"/>
        <end position="462"/>
    </location>
</feature>
<feature type="helix" evidence="8">
    <location>
        <begin position="463"/>
        <end position="468"/>
    </location>
</feature>
<feature type="helix" evidence="8">
    <location>
        <begin position="469"/>
        <end position="472"/>
    </location>
</feature>
<feature type="helix" evidence="8">
    <location>
        <begin position="473"/>
        <end position="479"/>
    </location>
</feature>
<feature type="strand" evidence="8">
    <location>
        <begin position="484"/>
        <end position="489"/>
    </location>
</feature>
<feature type="helix" evidence="8">
    <location>
        <begin position="494"/>
        <end position="504"/>
    </location>
</feature>
<feature type="helix" evidence="8">
    <location>
        <begin position="509"/>
        <end position="511"/>
    </location>
</feature>
<feature type="helix" evidence="8">
    <location>
        <begin position="519"/>
        <end position="525"/>
    </location>
</feature>
<feature type="strand" evidence="8">
    <location>
        <begin position="529"/>
        <end position="532"/>
    </location>
</feature>
<feature type="helix" evidence="8">
    <location>
        <begin position="536"/>
        <end position="547"/>
    </location>
</feature>
<feature type="strand" evidence="8">
    <location>
        <begin position="549"/>
        <end position="551"/>
    </location>
</feature>
<feature type="strand" evidence="8">
    <location>
        <begin position="553"/>
        <end position="559"/>
    </location>
</feature>
<feature type="helix" evidence="8">
    <location>
        <begin position="565"/>
        <end position="567"/>
    </location>
</feature>
<feature type="helix" evidence="8">
    <location>
        <begin position="569"/>
        <end position="571"/>
    </location>
</feature>
<comment type="function">
    <text evidence="2 4">Involved in the biosynthesis of the beta-lactamase inhibitor, clavulanic acid. Catalyzes the thiamine diphosphate (ThDP) dependent condensation of D-glyceraldehyde-3-phosphate (D-G3P) with L-arginine to yield the beta-amino acid, N2-(2-carboxyethyl)arginine (CEA) via a beta-elimination resulting in the formation of an enol which undergoes a second elimination to generate the alpha,beta-unsaturated acryloyl-ThDP.</text>
</comment>
<comment type="catalytic activity">
    <reaction evidence="2 4">
        <text>D-glyceraldehyde 3-phosphate + L-arginine = N(2)-(2-carboxyethyl)-L-arginine + phosphate + H(+)</text>
        <dbReference type="Rhea" id="RHEA:10556"/>
        <dbReference type="ChEBI" id="CHEBI:15378"/>
        <dbReference type="ChEBI" id="CHEBI:32682"/>
        <dbReference type="ChEBI" id="CHEBI:43474"/>
        <dbReference type="ChEBI" id="CHEBI:57304"/>
        <dbReference type="ChEBI" id="CHEBI:59776"/>
        <dbReference type="EC" id="2.5.1.66"/>
    </reaction>
</comment>
<comment type="cofactor">
    <cofactor evidence="1 3 4">
        <name>Mg(2+)</name>
        <dbReference type="ChEBI" id="CHEBI:18420"/>
    </cofactor>
    <text evidence="1 3 4">Binds 1 Mg(2+) ion per subunit.</text>
</comment>
<comment type="cofactor">
    <cofactor evidence="1 2 3 4">
        <name>thiamine diphosphate</name>
        <dbReference type="ChEBI" id="CHEBI:58937"/>
    </cofactor>
    <text evidence="1 2 3 4">Binds 1 thiamine pyrophosphate per subunit.</text>
</comment>
<comment type="subunit">
    <text evidence="1 3">Homotetramer; dimer of dimers.</text>
</comment>
<comment type="mass spectrometry" mass="60776.0" method="Electrospray" evidence="1"/>
<comment type="similarity">
    <text evidence="7">Belongs to the TPP enzyme family.</text>
</comment>
<accession>Q9LCV9</accession>
<dbReference type="EC" id="2.5.1.66" evidence="2 4"/>
<dbReference type="EMBL" id="U87786">
    <property type="protein sequence ID" value="AAF86619.1"/>
    <property type="molecule type" value="Genomic_DNA"/>
</dbReference>
<dbReference type="RefSeq" id="WP_003952509.1">
    <property type="nucleotide sequence ID" value="NZ_CM000913.1"/>
</dbReference>
<dbReference type="PDB" id="1UPA">
    <property type="method" value="X-ray"/>
    <property type="resolution" value="2.35 A"/>
    <property type="chains" value="A/B/C/D=1-573"/>
</dbReference>
<dbReference type="PDB" id="1UPB">
    <property type="method" value="X-ray"/>
    <property type="resolution" value="2.35 A"/>
    <property type="chains" value="A/B/C/D=1-573"/>
</dbReference>
<dbReference type="PDB" id="1UPC">
    <property type="method" value="X-ray"/>
    <property type="resolution" value="2.45 A"/>
    <property type="chains" value="A/B/C/D/E/F=1-573"/>
</dbReference>
<dbReference type="PDB" id="2IHT">
    <property type="method" value="X-ray"/>
    <property type="resolution" value="2.00 A"/>
    <property type="chains" value="A/B/C/D=1-573"/>
</dbReference>
<dbReference type="PDB" id="2IHU">
    <property type="method" value="X-ray"/>
    <property type="resolution" value="2.05 A"/>
    <property type="chains" value="A/B/C/D=1-573"/>
</dbReference>
<dbReference type="PDB" id="2IHV">
    <property type="method" value="X-ray"/>
    <property type="resolution" value="2.30 A"/>
    <property type="chains" value="A/B/C/D=1-573"/>
</dbReference>
<dbReference type="PDBsum" id="1UPA"/>
<dbReference type="PDBsum" id="1UPB"/>
<dbReference type="PDBsum" id="1UPC"/>
<dbReference type="PDBsum" id="2IHT"/>
<dbReference type="PDBsum" id="2IHU"/>
<dbReference type="PDBsum" id="2IHV"/>
<dbReference type="SMR" id="Q9LCV9"/>
<dbReference type="STRING" id="1901.BB341_07805"/>
<dbReference type="DrugBank" id="DB01987">
    <property type="generic name" value="Cocarboxylase"/>
</dbReference>
<dbReference type="GeneID" id="93729324"/>
<dbReference type="KEGG" id="sclf:BB341_07805"/>
<dbReference type="OrthoDB" id="4494979at2"/>
<dbReference type="BioCyc" id="MetaCyc:MONOMER-13478"/>
<dbReference type="EvolutionaryTrace" id="Q9LCV9"/>
<dbReference type="GO" id="GO:0005948">
    <property type="term" value="C:acetolactate synthase complex"/>
    <property type="evidence" value="ECO:0007669"/>
    <property type="project" value="TreeGrafter"/>
</dbReference>
<dbReference type="GO" id="GO:0003984">
    <property type="term" value="F:acetolactate synthase activity"/>
    <property type="evidence" value="ECO:0007669"/>
    <property type="project" value="TreeGrafter"/>
</dbReference>
<dbReference type="GO" id="GO:0050660">
    <property type="term" value="F:flavin adenine dinucleotide binding"/>
    <property type="evidence" value="ECO:0007669"/>
    <property type="project" value="TreeGrafter"/>
</dbReference>
<dbReference type="GO" id="GO:0000287">
    <property type="term" value="F:magnesium ion binding"/>
    <property type="evidence" value="ECO:0000314"/>
    <property type="project" value="UniProtKB"/>
</dbReference>
<dbReference type="GO" id="GO:0033848">
    <property type="term" value="F:N2-(2-carboxyethyl)arginine synthase activity"/>
    <property type="evidence" value="ECO:0000314"/>
    <property type="project" value="UniProtKB"/>
</dbReference>
<dbReference type="GO" id="GO:0030976">
    <property type="term" value="F:thiamine pyrophosphate binding"/>
    <property type="evidence" value="ECO:0000314"/>
    <property type="project" value="UniProtKB"/>
</dbReference>
<dbReference type="GO" id="GO:0009097">
    <property type="term" value="P:isoleucine biosynthetic process"/>
    <property type="evidence" value="ECO:0007669"/>
    <property type="project" value="TreeGrafter"/>
</dbReference>
<dbReference type="GO" id="GO:0009099">
    <property type="term" value="P:L-valine biosynthetic process"/>
    <property type="evidence" value="ECO:0007669"/>
    <property type="project" value="TreeGrafter"/>
</dbReference>
<dbReference type="CDD" id="cd00568">
    <property type="entry name" value="TPP_enzymes"/>
    <property type="match status" value="1"/>
</dbReference>
<dbReference type="CDD" id="cd07035">
    <property type="entry name" value="TPP_PYR_POX_like"/>
    <property type="match status" value="1"/>
</dbReference>
<dbReference type="FunFam" id="3.40.50.970:FF:000007">
    <property type="entry name" value="Acetolactate synthase"/>
    <property type="match status" value="1"/>
</dbReference>
<dbReference type="FunFam" id="3.40.50.970:FF:000130">
    <property type="entry name" value="N(2)-(2-carboxyethyl)arginine synthase"/>
    <property type="match status" value="1"/>
</dbReference>
<dbReference type="Gene3D" id="3.40.50.970">
    <property type="match status" value="2"/>
</dbReference>
<dbReference type="Gene3D" id="3.40.50.1220">
    <property type="entry name" value="TPP-binding domain"/>
    <property type="match status" value="1"/>
</dbReference>
<dbReference type="InterPro" id="IPR029035">
    <property type="entry name" value="DHS-like_NAD/FAD-binding_dom"/>
</dbReference>
<dbReference type="InterPro" id="IPR029061">
    <property type="entry name" value="THDP-binding"/>
</dbReference>
<dbReference type="InterPro" id="IPR012000">
    <property type="entry name" value="Thiamin_PyroP_enz_cen_dom"/>
</dbReference>
<dbReference type="InterPro" id="IPR012001">
    <property type="entry name" value="Thiamin_PyroP_enz_TPP-bd_dom"/>
</dbReference>
<dbReference type="InterPro" id="IPR000399">
    <property type="entry name" value="TPP-bd_CS"/>
</dbReference>
<dbReference type="InterPro" id="IPR045229">
    <property type="entry name" value="TPP_enz"/>
</dbReference>
<dbReference type="InterPro" id="IPR011766">
    <property type="entry name" value="TPP_enzyme_TPP-bd"/>
</dbReference>
<dbReference type="PANTHER" id="PTHR18968:SF129">
    <property type="entry name" value="ACETOLACTATE SYNTHASE"/>
    <property type="match status" value="1"/>
</dbReference>
<dbReference type="PANTHER" id="PTHR18968">
    <property type="entry name" value="THIAMINE PYROPHOSPHATE ENZYMES"/>
    <property type="match status" value="1"/>
</dbReference>
<dbReference type="Pfam" id="PF02775">
    <property type="entry name" value="TPP_enzyme_C"/>
    <property type="match status" value="1"/>
</dbReference>
<dbReference type="Pfam" id="PF00205">
    <property type="entry name" value="TPP_enzyme_M"/>
    <property type="match status" value="1"/>
</dbReference>
<dbReference type="Pfam" id="PF02776">
    <property type="entry name" value="TPP_enzyme_N"/>
    <property type="match status" value="1"/>
</dbReference>
<dbReference type="SUPFAM" id="SSF52467">
    <property type="entry name" value="DHS-like NAD/FAD-binding domain"/>
    <property type="match status" value="1"/>
</dbReference>
<dbReference type="SUPFAM" id="SSF52518">
    <property type="entry name" value="Thiamin diphosphate-binding fold (THDP-binding)"/>
    <property type="match status" value="2"/>
</dbReference>
<dbReference type="PROSITE" id="PS00187">
    <property type="entry name" value="TPP_ENZYMES"/>
    <property type="match status" value="1"/>
</dbReference>
<proteinExistence type="evidence at protein level"/>
<keyword id="KW-0002">3D-structure</keyword>
<keyword id="KW-0460">Magnesium</keyword>
<keyword id="KW-0479">Metal-binding</keyword>
<keyword id="KW-0786">Thiamine pyrophosphate</keyword>
<keyword id="KW-0808">Transferase</keyword>
<name>CEAS_STRCL</name>
<sequence length="573" mass="60907">MSRVSTAPSGKPTAAHALLSRLRDHGVGKVFGVVGREAASILFDEVEGIDFVLTRHEFTAGVAADVLARITGRPQACWATLGPGMTNLSTGIATSVLDRSPVIALAAQSESHDIFPNDTHQCLDSVAIVAPMSKYAVELQRPHEITDLVDSAVNAAMTEPVGPSFISLPVDLLGSSEGIDTTVPNPPANTPAKPVGVVADGWQKAADQAAALLAEAKHPVLVVGAAAIRSGAVPAIRALAERLNIPVITTYIAKGVLPVGHELNYGAVTGYMDGILNFPALQTMFAPVDLVLTVGYDYAEDLRPSMWQKGIEKKTVRISPTVNPIPRVYRPDVDVVTDVLAFVEHFETATASFGAKQRHDIEPLRARIAEFLADPETYEDGMRVHQVIDSMNTVMEEAAEPGEGTIVSDIGFFRHYGVLFARADQPFGFLTSAGCSSFGYGIPAAIGAQMARPDQPTFLIAGDGGFHSNSSDLETIARLNLPIVTVVVNNDTNGLIELYQNIGHHRSHDPAVKFGGVDFVALAEANGVDATRATNREELLAALRKGAELGRPFLIEVPVNYDFQPGGFGALSI</sequence>